<name>CMOA_YERP3</name>
<proteinExistence type="inferred from homology"/>
<accession>A7FID3</accession>
<dbReference type="EC" id="2.1.3.-" evidence="1"/>
<dbReference type="EMBL" id="CP000720">
    <property type="protein sequence ID" value="ABS48269.1"/>
    <property type="molecule type" value="Genomic_DNA"/>
</dbReference>
<dbReference type="RefSeq" id="WP_002211207.1">
    <property type="nucleotide sequence ID" value="NC_009708.1"/>
</dbReference>
<dbReference type="SMR" id="A7FID3"/>
<dbReference type="GeneID" id="57976611"/>
<dbReference type="KEGG" id="ypi:YpsIP31758_2038"/>
<dbReference type="HOGENOM" id="CLU_078475_0_0_6"/>
<dbReference type="Proteomes" id="UP000002412">
    <property type="component" value="Chromosome"/>
</dbReference>
<dbReference type="GO" id="GO:0016743">
    <property type="term" value="F:carboxyl- or carbamoyltransferase activity"/>
    <property type="evidence" value="ECO:0007669"/>
    <property type="project" value="UniProtKB-UniRule"/>
</dbReference>
<dbReference type="GO" id="GO:1904047">
    <property type="term" value="F:S-adenosyl-L-methionine binding"/>
    <property type="evidence" value="ECO:0007669"/>
    <property type="project" value="UniProtKB-UniRule"/>
</dbReference>
<dbReference type="GO" id="GO:0002098">
    <property type="term" value="P:tRNA wobble uridine modification"/>
    <property type="evidence" value="ECO:0007669"/>
    <property type="project" value="InterPro"/>
</dbReference>
<dbReference type="CDD" id="cd02440">
    <property type="entry name" value="AdoMet_MTases"/>
    <property type="match status" value="1"/>
</dbReference>
<dbReference type="Gene3D" id="3.40.50.150">
    <property type="entry name" value="Vaccinia Virus protein VP39"/>
    <property type="match status" value="1"/>
</dbReference>
<dbReference type="HAMAP" id="MF_01589">
    <property type="entry name" value="Cx_SAM_synthase"/>
    <property type="match status" value="1"/>
</dbReference>
<dbReference type="InterPro" id="IPR005271">
    <property type="entry name" value="CmoA"/>
</dbReference>
<dbReference type="InterPro" id="IPR041698">
    <property type="entry name" value="Methyltransf_25"/>
</dbReference>
<dbReference type="InterPro" id="IPR029063">
    <property type="entry name" value="SAM-dependent_MTases_sf"/>
</dbReference>
<dbReference type="NCBIfam" id="TIGR00740">
    <property type="entry name" value="carboxy-S-adenosyl-L-methionine synthase CmoA"/>
    <property type="match status" value="1"/>
</dbReference>
<dbReference type="NCBIfam" id="NF011995">
    <property type="entry name" value="PRK15451.1"/>
    <property type="match status" value="1"/>
</dbReference>
<dbReference type="PANTHER" id="PTHR43861:SF2">
    <property type="entry name" value="CARBOXY-S-ADENOSYL-L-METHIONINE SYNTHASE"/>
    <property type="match status" value="1"/>
</dbReference>
<dbReference type="PANTHER" id="PTHR43861">
    <property type="entry name" value="TRANS-ACONITATE 2-METHYLTRANSFERASE-RELATED"/>
    <property type="match status" value="1"/>
</dbReference>
<dbReference type="Pfam" id="PF13649">
    <property type="entry name" value="Methyltransf_25"/>
    <property type="match status" value="1"/>
</dbReference>
<dbReference type="PIRSF" id="PIRSF006325">
    <property type="entry name" value="MeTrfase_bac"/>
    <property type="match status" value="1"/>
</dbReference>
<dbReference type="SUPFAM" id="SSF53335">
    <property type="entry name" value="S-adenosyl-L-methionine-dependent methyltransferases"/>
    <property type="match status" value="1"/>
</dbReference>
<comment type="function">
    <text evidence="1">Catalyzes the conversion of S-adenosyl-L-methionine (SAM) to carboxy-S-adenosyl-L-methionine (Cx-SAM).</text>
</comment>
<comment type="catalytic activity">
    <reaction evidence="1">
        <text>prephenate + S-adenosyl-L-methionine = carboxy-S-adenosyl-L-methionine + 3-phenylpyruvate + H2O</text>
        <dbReference type="Rhea" id="RHEA:51692"/>
        <dbReference type="ChEBI" id="CHEBI:15377"/>
        <dbReference type="ChEBI" id="CHEBI:18005"/>
        <dbReference type="ChEBI" id="CHEBI:29934"/>
        <dbReference type="ChEBI" id="CHEBI:59789"/>
        <dbReference type="ChEBI" id="CHEBI:134278"/>
    </reaction>
</comment>
<comment type="subunit">
    <text evidence="1">Homodimer.</text>
</comment>
<comment type="similarity">
    <text evidence="1">Belongs to the class I-like SAM-binding methyltransferase superfamily. Cx-SAM synthase family.</text>
</comment>
<keyword id="KW-0949">S-adenosyl-L-methionine</keyword>
<keyword id="KW-0808">Transferase</keyword>
<sequence length="267" mass="30040">MPNRDTQSQNDTPRHSPEAAEPQRDSLFAAPIAKLGDWTFDEKVAEVFPDMIQRSVPGYSNIISMIGMLAERFVQPNSQIYDLGCSLGAATLSMRRNIKAEGCKIIAVDNSPAMVERCRRHIDAFRAETPVDVVEADILDIKLENASMVVLNFTLQFLEPANRQRLLNQVYQGLRPGGALVLSEKFSFADHNVGELLFNMHHDFKRANGYSELEISQKRSMLENVMLTDSVETHKNRLHQAGFEHAEVWFQCFNFGSLIALKAGEAQ</sequence>
<protein>
    <recommendedName>
        <fullName evidence="1">Carboxy-S-adenosyl-L-methionine synthase</fullName>
        <shortName evidence="1">Cx-SAM synthase</shortName>
        <ecNumber evidence="1">2.1.3.-</ecNumber>
    </recommendedName>
</protein>
<organism>
    <name type="scientific">Yersinia pseudotuberculosis serotype O:1b (strain IP 31758)</name>
    <dbReference type="NCBI Taxonomy" id="349747"/>
    <lineage>
        <taxon>Bacteria</taxon>
        <taxon>Pseudomonadati</taxon>
        <taxon>Pseudomonadota</taxon>
        <taxon>Gammaproteobacteria</taxon>
        <taxon>Enterobacterales</taxon>
        <taxon>Yersiniaceae</taxon>
        <taxon>Yersinia</taxon>
    </lineage>
</organism>
<feature type="chain" id="PRO_1000069325" description="Carboxy-S-adenosyl-L-methionine synthase">
    <location>
        <begin position="1"/>
        <end position="267"/>
    </location>
</feature>
<feature type="region of interest" description="Disordered" evidence="2">
    <location>
        <begin position="1"/>
        <end position="25"/>
    </location>
</feature>
<feature type="compositionally biased region" description="Polar residues" evidence="2">
    <location>
        <begin position="1"/>
        <end position="11"/>
    </location>
</feature>
<feature type="compositionally biased region" description="Basic and acidic residues" evidence="2">
    <location>
        <begin position="12"/>
        <end position="24"/>
    </location>
</feature>
<feature type="binding site" evidence="1">
    <location>
        <position position="59"/>
    </location>
    <ligand>
        <name>S-adenosyl-L-methionine</name>
        <dbReference type="ChEBI" id="CHEBI:59789"/>
    </ligand>
</feature>
<feature type="binding site" evidence="1">
    <location>
        <begin position="84"/>
        <end position="86"/>
    </location>
    <ligand>
        <name>S-adenosyl-L-methionine</name>
        <dbReference type="ChEBI" id="CHEBI:59789"/>
    </ligand>
</feature>
<feature type="binding site" evidence="1">
    <location>
        <begin position="109"/>
        <end position="110"/>
    </location>
    <ligand>
        <name>S-adenosyl-L-methionine</name>
        <dbReference type="ChEBI" id="CHEBI:59789"/>
    </ligand>
</feature>
<feature type="binding site" evidence="1">
    <location>
        <begin position="137"/>
        <end position="138"/>
    </location>
    <ligand>
        <name>S-adenosyl-L-methionine</name>
        <dbReference type="ChEBI" id="CHEBI:59789"/>
    </ligand>
</feature>
<feature type="binding site" evidence="1">
    <location>
        <position position="152"/>
    </location>
    <ligand>
        <name>S-adenosyl-L-methionine</name>
        <dbReference type="ChEBI" id="CHEBI:59789"/>
    </ligand>
</feature>
<feature type="binding site" evidence="1">
    <location>
        <position position="219"/>
    </location>
    <ligand>
        <name>S-adenosyl-L-methionine</name>
        <dbReference type="ChEBI" id="CHEBI:59789"/>
    </ligand>
</feature>
<gene>
    <name evidence="1" type="primary">cmoA</name>
    <name type="ordered locus">YpsIP31758_2038</name>
</gene>
<evidence type="ECO:0000255" key="1">
    <source>
        <dbReference type="HAMAP-Rule" id="MF_01589"/>
    </source>
</evidence>
<evidence type="ECO:0000256" key="2">
    <source>
        <dbReference type="SAM" id="MobiDB-lite"/>
    </source>
</evidence>
<reference key="1">
    <citation type="journal article" date="2007" name="PLoS Genet.">
        <title>The complete genome sequence of Yersinia pseudotuberculosis IP31758, the causative agent of Far East scarlet-like fever.</title>
        <authorList>
            <person name="Eppinger M."/>
            <person name="Rosovitz M.J."/>
            <person name="Fricke W.F."/>
            <person name="Rasko D.A."/>
            <person name="Kokorina G."/>
            <person name="Fayolle C."/>
            <person name="Lindler L.E."/>
            <person name="Carniel E."/>
            <person name="Ravel J."/>
        </authorList>
    </citation>
    <scope>NUCLEOTIDE SEQUENCE [LARGE SCALE GENOMIC DNA]</scope>
    <source>
        <strain>IP 31758</strain>
    </source>
</reference>